<keyword id="KW-0574">Periplasm</keyword>
<keyword id="KW-0732">Signal</keyword>
<sequence length="250" mass="26552">MNTRASNFLAASFSTIMLVGAFSLPAFAQENQMTTQPARIAVTGEGMMTASPDMAILNLSVLRQAKTAREAMTANNEAMTKVLDAMKKAGIEDRDLQTGGINIQPIYVYPDDKNNLKEPTITGYSVSTSLTVRVRELANVGKILDESVTLGVNQGGDLNLVNDNPSAVINEARKRAVANAIAKAKTLADAAGVGLGRVVEISELSRPPMPMPIARGQFRTMLAAAPDNSVPIAAGENSYNVSVNVVFEIK</sequence>
<evidence type="ECO:0000250" key="1"/>
<organism>
    <name type="scientific">Brucella melitensis biotype 1 (strain ATCC 23456 / CCUG 17765 / NCTC 10094 / 16M)</name>
    <dbReference type="NCBI Taxonomy" id="224914"/>
    <lineage>
        <taxon>Bacteria</taxon>
        <taxon>Pseudomonadati</taxon>
        <taxon>Pseudomonadota</taxon>
        <taxon>Alphaproteobacteria</taxon>
        <taxon>Hyphomicrobiales</taxon>
        <taxon>Brucellaceae</taxon>
        <taxon>Brucella/Ochrobactrum group</taxon>
        <taxon>Brucella</taxon>
    </lineage>
</organism>
<dbReference type="EMBL" id="U30815">
    <property type="protein sequence ID" value="AAB17713.1"/>
    <property type="molecule type" value="Genomic_DNA"/>
</dbReference>
<dbReference type="EMBL" id="U45996">
    <property type="protein sequence ID" value="AAB38523.1"/>
    <property type="molecule type" value="Genomic_DNA"/>
</dbReference>
<dbReference type="EMBL" id="AE008917">
    <property type="protein sequence ID" value="AAL51717.1"/>
    <property type="molecule type" value="Genomic_DNA"/>
</dbReference>
<dbReference type="PIR" id="AB3319">
    <property type="entry name" value="AB3319"/>
</dbReference>
<dbReference type="RefSeq" id="WP_002964581.1">
    <property type="nucleotide sequence ID" value="NZ_GG703780.1"/>
</dbReference>
<dbReference type="SMR" id="P0A3U8"/>
<dbReference type="GeneID" id="97533328"/>
<dbReference type="KEGG" id="bme:BMEI0536"/>
<dbReference type="KEGG" id="bmel:DK63_890"/>
<dbReference type="PATRIC" id="fig|224914.52.peg.934"/>
<dbReference type="eggNOG" id="COG2968">
    <property type="taxonomic scope" value="Bacteria"/>
</dbReference>
<dbReference type="PRO" id="PR:P0A3U8"/>
<dbReference type="Proteomes" id="UP000000419">
    <property type="component" value="Chromosome I"/>
</dbReference>
<dbReference type="GO" id="GO:0042597">
    <property type="term" value="C:periplasmic space"/>
    <property type="evidence" value="ECO:0007669"/>
    <property type="project" value="UniProtKB-SubCell"/>
</dbReference>
<dbReference type="GO" id="GO:0006974">
    <property type="term" value="P:DNA damage response"/>
    <property type="evidence" value="ECO:0007669"/>
    <property type="project" value="TreeGrafter"/>
</dbReference>
<dbReference type="Gene3D" id="3.30.110.170">
    <property type="entry name" value="Protein of unknown function (DUF541), domain 1"/>
    <property type="match status" value="1"/>
</dbReference>
<dbReference type="Gene3D" id="3.30.70.2970">
    <property type="entry name" value="Protein of unknown function (DUF541), domain 2"/>
    <property type="match status" value="1"/>
</dbReference>
<dbReference type="InterPro" id="IPR052022">
    <property type="entry name" value="26kDa_periplasmic_antigen"/>
</dbReference>
<dbReference type="InterPro" id="IPR007497">
    <property type="entry name" value="SIMPL/DUF541"/>
</dbReference>
<dbReference type="PANTHER" id="PTHR34387:SF1">
    <property type="entry name" value="PERIPLASMIC IMMUNOGENIC PROTEIN"/>
    <property type="match status" value="1"/>
</dbReference>
<dbReference type="PANTHER" id="PTHR34387">
    <property type="entry name" value="SLR1258 PROTEIN"/>
    <property type="match status" value="1"/>
</dbReference>
<dbReference type="Pfam" id="PF04402">
    <property type="entry name" value="SIMPL"/>
    <property type="match status" value="1"/>
</dbReference>
<accession>P0A3U8</accession>
<accession>Q57099</accession>
<reference key="1">
    <citation type="journal article" date="1996" name="Infect. Immun.">
        <title>Cloning of a Brucella melitensis group 3 antigen gene encoding Omp28, a protein recognized by the humoral immune response during human brucellosis.</title>
        <authorList>
            <person name="Lindler L.E."/>
            <person name="Hadfield T.L."/>
            <person name="Tall B.D."/>
            <person name="Snellings N.J."/>
            <person name="Rubin F.A."/>
            <person name="van de Verg L.L."/>
            <person name="Hoover D."/>
            <person name="Warren R.L."/>
        </authorList>
    </citation>
    <scope>NUCLEOTIDE SEQUENCE [GENOMIC DNA]</scope>
    <source>
        <strain>ATCC 23456 / CCUG 17765 / NCTC 10094 / 16M</strain>
    </source>
</reference>
<reference key="2">
    <citation type="journal article" date="1996" name="FEMS Microbiol. Lett.">
        <title>Cloning, nucleotide sequence, and expression of the Brucella melitensis bp26 gene coding for a protein immunogenic in infected sheep.</title>
        <authorList>
            <person name="Cloeckaert A."/>
            <person name="Debbarh H.S."/>
            <person name="Vizcaino N."/>
            <person name="Saman E."/>
            <person name="Dubray G."/>
            <person name="Zygmunt M.S."/>
        </authorList>
    </citation>
    <scope>NUCLEOTIDE SEQUENCE [GENOMIC DNA]</scope>
    <source>
        <strain>ATCC 23456 / CCUG 17765 / NCTC 10094 / 16M</strain>
    </source>
</reference>
<reference key="3">
    <citation type="journal article" date="2002" name="Proc. Natl. Acad. Sci. U.S.A.">
        <title>The genome sequence of the facultative intracellular pathogen Brucella melitensis.</title>
        <authorList>
            <person name="DelVecchio V.G."/>
            <person name="Kapatral V."/>
            <person name="Redkar R.J."/>
            <person name="Patra G."/>
            <person name="Mujer C."/>
            <person name="Los T."/>
            <person name="Ivanova N."/>
            <person name="Anderson I."/>
            <person name="Bhattacharyya A."/>
            <person name="Lykidis A."/>
            <person name="Reznik G."/>
            <person name="Jablonski L."/>
            <person name="Larsen N."/>
            <person name="D'Souza M."/>
            <person name="Bernal A."/>
            <person name="Mazur M."/>
            <person name="Goltsman E."/>
            <person name="Selkov E."/>
            <person name="Elzer P.H."/>
            <person name="Hagius S."/>
            <person name="O'Callaghan D."/>
            <person name="Letesson J.-J."/>
            <person name="Haselkorn R."/>
            <person name="Kyrpides N.C."/>
            <person name="Overbeek R."/>
        </authorList>
    </citation>
    <scope>NUCLEOTIDE SEQUENCE [LARGE SCALE GENOMIC DNA]</scope>
    <source>
        <strain>ATCC 23456 / CCUG 17765 / NCTC 10094 / 16M</strain>
    </source>
</reference>
<comment type="subcellular location">
    <subcellularLocation>
        <location>Periplasm</location>
    </subcellularLocation>
</comment>
<proteinExistence type="inferred from homology"/>
<feature type="signal peptide" evidence="1">
    <location>
        <begin position="1"/>
        <end position="28"/>
    </location>
</feature>
<feature type="chain" id="PRO_0000020826" description="26 kDa periplasmic immunogenic protein">
    <location>
        <begin position="29"/>
        <end position="250"/>
    </location>
</feature>
<name>BP26_BRUME</name>
<protein>
    <recommendedName>
        <fullName>26 kDa periplasmic immunogenic protein</fullName>
    </recommendedName>
    <alternativeName>
        <fullName>28 kDa cytosoluble protein</fullName>
    </alternativeName>
    <alternativeName>
        <fullName>28 kDa outer membrane protein</fullName>
    </alternativeName>
    <alternativeName>
        <fullName>CP28</fullName>
    </alternativeName>
</protein>
<gene>
    <name type="primary">bp26</name>
    <name type="synonym">omp28</name>
    <name type="ordered locus">BMEI0536</name>
</gene>